<dbReference type="EMBL" id="BA000021">
    <property type="protein sequence ID" value="BAC24701.1"/>
    <property type="molecule type" value="Genomic_DNA"/>
</dbReference>
<dbReference type="SMR" id="Q8D200"/>
<dbReference type="STRING" id="36870.gene:10369064"/>
<dbReference type="KEGG" id="wbr:rplE"/>
<dbReference type="eggNOG" id="COG0094">
    <property type="taxonomic scope" value="Bacteria"/>
</dbReference>
<dbReference type="HOGENOM" id="CLU_061015_2_1_6"/>
<dbReference type="OrthoDB" id="9806626at2"/>
<dbReference type="Proteomes" id="UP000000562">
    <property type="component" value="Chromosome"/>
</dbReference>
<dbReference type="GO" id="GO:1990904">
    <property type="term" value="C:ribonucleoprotein complex"/>
    <property type="evidence" value="ECO:0007669"/>
    <property type="project" value="UniProtKB-KW"/>
</dbReference>
<dbReference type="GO" id="GO:0005840">
    <property type="term" value="C:ribosome"/>
    <property type="evidence" value="ECO:0007669"/>
    <property type="project" value="UniProtKB-KW"/>
</dbReference>
<dbReference type="GO" id="GO:0019843">
    <property type="term" value="F:rRNA binding"/>
    <property type="evidence" value="ECO:0007669"/>
    <property type="project" value="UniProtKB-UniRule"/>
</dbReference>
<dbReference type="GO" id="GO:0003735">
    <property type="term" value="F:structural constituent of ribosome"/>
    <property type="evidence" value="ECO:0007669"/>
    <property type="project" value="InterPro"/>
</dbReference>
<dbReference type="GO" id="GO:0000049">
    <property type="term" value="F:tRNA binding"/>
    <property type="evidence" value="ECO:0007669"/>
    <property type="project" value="UniProtKB-UniRule"/>
</dbReference>
<dbReference type="GO" id="GO:0006412">
    <property type="term" value="P:translation"/>
    <property type="evidence" value="ECO:0007669"/>
    <property type="project" value="UniProtKB-UniRule"/>
</dbReference>
<dbReference type="FunFam" id="3.30.1440.10:FF:000001">
    <property type="entry name" value="50S ribosomal protein L5"/>
    <property type="match status" value="1"/>
</dbReference>
<dbReference type="Gene3D" id="3.30.1440.10">
    <property type="match status" value="1"/>
</dbReference>
<dbReference type="HAMAP" id="MF_01333_B">
    <property type="entry name" value="Ribosomal_uL5_B"/>
    <property type="match status" value="1"/>
</dbReference>
<dbReference type="InterPro" id="IPR002132">
    <property type="entry name" value="Ribosomal_uL5"/>
</dbReference>
<dbReference type="InterPro" id="IPR020930">
    <property type="entry name" value="Ribosomal_uL5_bac-type"/>
</dbReference>
<dbReference type="InterPro" id="IPR031309">
    <property type="entry name" value="Ribosomal_uL5_C"/>
</dbReference>
<dbReference type="InterPro" id="IPR022803">
    <property type="entry name" value="Ribosomal_uL5_dom_sf"/>
</dbReference>
<dbReference type="InterPro" id="IPR031310">
    <property type="entry name" value="Ribosomal_uL5_N"/>
</dbReference>
<dbReference type="NCBIfam" id="NF000585">
    <property type="entry name" value="PRK00010.1"/>
    <property type="match status" value="1"/>
</dbReference>
<dbReference type="PANTHER" id="PTHR11994">
    <property type="entry name" value="60S RIBOSOMAL PROTEIN L11-RELATED"/>
    <property type="match status" value="1"/>
</dbReference>
<dbReference type="Pfam" id="PF00281">
    <property type="entry name" value="Ribosomal_L5"/>
    <property type="match status" value="1"/>
</dbReference>
<dbReference type="Pfam" id="PF00673">
    <property type="entry name" value="Ribosomal_L5_C"/>
    <property type="match status" value="1"/>
</dbReference>
<dbReference type="PIRSF" id="PIRSF002161">
    <property type="entry name" value="Ribosomal_L5"/>
    <property type="match status" value="1"/>
</dbReference>
<dbReference type="SUPFAM" id="SSF55282">
    <property type="entry name" value="RL5-like"/>
    <property type="match status" value="1"/>
</dbReference>
<evidence type="ECO:0000255" key="1">
    <source>
        <dbReference type="HAMAP-Rule" id="MF_01333"/>
    </source>
</evidence>
<evidence type="ECO:0000305" key="2"/>
<keyword id="KW-1185">Reference proteome</keyword>
<keyword id="KW-0687">Ribonucleoprotein</keyword>
<keyword id="KW-0689">Ribosomal protein</keyword>
<keyword id="KW-0694">RNA-binding</keyword>
<keyword id="KW-0699">rRNA-binding</keyword>
<keyword id="KW-0820">tRNA-binding</keyword>
<gene>
    <name evidence="1" type="primary">rplE</name>
    <name type="ordered locus">WIGBR5550</name>
</gene>
<organism>
    <name type="scientific">Wigglesworthia glossinidia brevipalpis</name>
    <dbReference type="NCBI Taxonomy" id="36870"/>
    <lineage>
        <taxon>Bacteria</taxon>
        <taxon>Pseudomonadati</taxon>
        <taxon>Pseudomonadota</taxon>
        <taxon>Gammaproteobacteria</taxon>
        <taxon>Enterobacterales</taxon>
        <taxon>Erwiniaceae</taxon>
        <taxon>Wigglesworthia</taxon>
    </lineage>
</organism>
<comment type="function">
    <text evidence="1">This is one of the proteins that bind and probably mediate the attachment of the 5S RNA into the large ribosomal subunit, where it forms part of the central protuberance. In the 70S ribosome it contacts protein S13 of the 30S subunit (bridge B1b), connecting the 2 subunits; this bridge is implicated in subunit movement. Contacts the P site tRNA; the 5S rRNA and some of its associated proteins might help stabilize positioning of ribosome-bound tRNAs.</text>
</comment>
<comment type="subunit">
    <text evidence="1">Part of the 50S ribosomal subunit; part of the 5S rRNA/L5/L18/L25 subcomplex. Contacts the 5S rRNA and the P site tRNA. Forms a bridge to the 30S subunit in the 70S ribosome.</text>
</comment>
<comment type="similarity">
    <text evidence="1">Belongs to the universal ribosomal protein uL5 family.</text>
</comment>
<feature type="chain" id="PRO_0000125026" description="Large ribosomal subunit protein uL5">
    <location>
        <begin position="1"/>
        <end position="178"/>
    </location>
</feature>
<proteinExistence type="inferred from homology"/>
<protein>
    <recommendedName>
        <fullName evidence="1">Large ribosomal subunit protein uL5</fullName>
    </recommendedName>
    <alternativeName>
        <fullName evidence="2">50S ribosomal protein L5</fullName>
    </alternativeName>
</protein>
<reference key="1">
    <citation type="journal article" date="2002" name="Nat. Genet.">
        <title>Genome sequence of the endocellular obligate symbiont of tsetse flies, Wigglesworthia glossinidia.</title>
        <authorList>
            <person name="Akman L."/>
            <person name="Yamashita A."/>
            <person name="Watanabe H."/>
            <person name="Oshima K."/>
            <person name="Shiba T."/>
            <person name="Hattori M."/>
            <person name="Aksoy S."/>
        </authorList>
    </citation>
    <scope>NUCLEOTIDE SEQUENCE [LARGE SCALE GENOMIC DNA]</scope>
</reference>
<name>RL5_WIGBR</name>
<accession>Q8D200</accession>
<sequence length="178" mass="20499">MQLYDFYKKNVLIKLKNKFNYKSIMQVPKIEKITLNMGVGKASFDKKLLEHAVNDLTLISGQKPYITKAKKSIANFKIRQGHPIGCKVTLRGKLMWFFFQKLICIAIPRIRDFRGLPVKSFDGFGNYSLGIKEQIIFPEIDYDKIDKIRGLDITITTNAKSDKEGLALLSAFNFPFRK</sequence>